<accession>Q5SQ80</accession>
<sequence>MKLFGFGSRRGQTAQGSIDHVYTGSGYRIRDSELQKIHRAAVKGDAAEVERCLARRSGDLDALDKQHRTALHLACASGHVQVVTLLVNRKCQIDVCDKENRTPLIQAVHCQEEACAVILLEHGANPNLKDIYGNTALHYAVYSESTSLAEKLLSHGAHIEALDKDNNTPLLFAIICKKEKMVEFLLKRKASSHAVDRLRRSALMLAVYYDSPGIVNILLKQNIDVFAQDMCGRDAEDYAISHHLTKIQQQILEHKKKILKKEKSDVGSSDESAVSIFHELRVDSLPASDDKDLNVATKQCVPEKVSEPLPGSSHEKGNRIVNGQGEGPPAKHPSLKPSTEVEDPAVKGAVQRKNVQTLRAEQALPVASEEEQERHERSEKKQPQVKEGNNTNKSEKIQLSENICDSTSSAAAGRLTQQRKIGKTYPQQFPKKLKEEHDRCTLKQENEEKTNVNMLYKKNREELERKEKQYKKEVEAKQLEPTVQSLEMKSKTARNTPNRDFHNHEEMKGLMDENCILKADIAILRQEICTMKNDNLEKENKYLKDIKIVKETNAALEKYIKLNEEMITETAFRYQQELNDLKAENTRLNAELLKEKESKKRLEADIESYQSRLAAAISKHSESVKTERNLKLALERTRDVSVQVEMSSAISKVKDENEFLTEQLSETQIKFNALKDKFRKTRDSLRKKSLALETVQNDLSQTQQQTQEMKEMYQNAEAKVNNSTGKWNCVEERICHLQRENAWLVQQLDDVHQKEDHKEIVTNIQRGFIESGKKDLVLEEKSKKLMNECDHLKESLFQYEREKTEGVVSIKEDKYFQTSRKKI</sequence>
<comment type="caution">
    <text evidence="3">Could be the product of a pseudogene.</text>
</comment>
<proteinExistence type="uncertain"/>
<name>A20A2_HUMAN</name>
<evidence type="ECO:0000255" key="1"/>
<evidence type="ECO:0000256" key="2">
    <source>
        <dbReference type="SAM" id="MobiDB-lite"/>
    </source>
</evidence>
<evidence type="ECO:0000305" key="3"/>
<evidence type="ECO:0000312" key="4">
    <source>
        <dbReference type="HGNC" id="HGNC:31979"/>
    </source>
</evidence>
<reference key="1">
    <citation type="journal article" date="2004" name="Nature">
        <title>DNA sequence and analysis of human chromosome 9.</title>
        <authorList>
            <person name="Humphray S.J."/>
            <person name="Oliver K."/>
            <person name="Hunt A.R."/>
            <person name="Plumb R.W."/>
            <person name="Loveland J.E."/>
            <person name="Howe K.L."/>
            <person name="Andrews T.D."/>
            <person name="Searle S."/>
            <person name="Hunt S.E."/>
            <person name="Scott C.E."/>
            <person name="Jones M.C."/>
            <person name="Ainscough R."/>
            <person name="Almeida J.P."/>
            <person name="Ambrose K.D."/>
            <person name="Ashwell R.I.S."/>
            <person name="Babbage A.K."/>
            <person name="Babbage S."/>
            <person name="Bagguley C.L."/>
            <person name="Bailey J."/>
            <person name="Banerjee R."/>
            <person name="Barker D.J."/>
            <person name="Barlow K.F."/>
            <person name="Bates K."/>
            <person name="Beasley H."/>
            <person name="Beasley O."/>
            <person name="Bird C.P."/>
            <person name="Bray-Allen S."/>
            <person name="Brown A.J."/>
            <person name="Brown J.Y."/>
            <person name="Burford D."/>
            <person name="Burrill W."/>
            <person name="Burton J."/>
            <person name="Carder C."/>
            <person name="Carter N.P."/>
            <person name="Chapman J.C."/>
            <person name="Chen Y."/>
            <person name="Clarke G."/>
            <person name="Clark S.Y."/>
            <person name="Clee C.M."/>
            <person name="Clegg S."/>
            <person name="Collier R.E."/>
            <person name="Corby N."/>
            <person name="Crosier M."/>
            <person name="Cummings A.T."/>
            <person name="Davies J."/>
            <person name="Dhami P."/>
            <person name="Dunn M."/>
            <person name="Dutta I."/>
            <person name="Dyer L.W."/>
            <person name="Earthrowl M.E."/>
            <person name="Faulkner L."/>
            <person name="Fleming C.J."/>
            <person name="Frankish A."/>
            <person name="Frankland J.A."/>
            <person name="French L."/>
            <person name="Fricker D.G."/>
            <person name="Garner P."/>
            <person name="Garnett J."/>
            <person name="Ghori J."/>
            <person name="Gilbert J.G.R."/>
            <person name="Glison C."/>
            <person name="Grafham D.V."/>
            <person name="Gribble S."/>
            <person name="Griffiths C."/>
            <person name="Griffiths-Jones S."/>
            <person name="Grocock R."/>
            <person name="Guy J."/>
            <person name="Hall R.E."/>
            <person name="Hammond S."/>
            <person name="Harley J.L."/>
            <person name="Harrison E.S.I."/>
            <person name="Hart E.A."/>
            <person name="Heath P.D."/>
            <person name="Henderson C.D."/>
            <person name="Hopkins B.L."/>
            <person name="Howard P.J."/>
            <person name="Howden P.J."/>
            <person name="Huckle E."/>
            <person name="Johnson C."/>
            <person name="Johnson D."/>
            <person name="Joy A.A."/>
            <person name="Kay M."/>
            <person name="Keenan S."/>
            <person name="Kershaw J.K."/>
            <person name="Kimberley A.M."/>
            <person name="King A."/>
            <person name="Knights A."/>
            <person name="Laird G.K."/>
            <person name="Langford C."/>
            <person name="Lawlor S."/>
            <person name="Leongamornlert D.A."/>
            <person name="Leversha M."/>
            <person name="Lloyd C."/>
            <person name="Lloyd D.M."/>
            <person name="Lovell J."/>
            <person name="Martin S."/>
            <person name="Mashreghi-Mohammadi M."/>
            <person name="Matthews L."/>
            <person name="McLaren S."/>
            <person name="McLay K.E."/>
            <person name="McMurray A."/>
            <person name="Milne S."/>
            <person name="Nickerson T."/>
            <person name="Nisbett J."/>
            <person name="Nordsiek G."/>
            <person name="Pearce A.V."/>
            <person name="Peck A.I."/>
            <person name="Porter K.M."/>
            <person name="Pandian R."/>
            <person name="Pelan S."/>
            <person name="Phillimore B."/>
            <person name="Povey S."/>
            <person name="Ramsey Y."/>
            <person name="Rand V."/>
            <person name="Scharfe M."/>
            <person name="Sehra H.K."/>
            <person name="Shownkeen R."/>
            <person name="Sims S.K."/>
            <person name="Skuce C.D."/>
            <person name="Smith M."/>
            <person name="Steward C.A."/>
            <person name="Swarbreck D."/>
            <person name="Sycamore N."/>
            <person name="Tester J."/>
            <person name="Thorpe A."/>
            <person name="Tracey A."/>
            <person name="Tromans A."/>
            <person name="Thomas D.W."/>
            <person name="Wall M."/>
            <person name="Wallis J.M."/>
            <person name="West A.P."/>
            <person name="Whitehead S.L."/>
            <person name="Willey D.L."/>
            <person name="Williams S.A."/>
            <person name="Wilming L."/>
            <person name="Wray P.W."/>
            <person name="Young L."/>
            <person name="Ashurst J.L."/>
            <person name="Coulson A."/>
            <person name="Blocker H."/>
            <person name="Durbin R.M."/>
            <person name="Sulston J.E."/>
            <person name="Hubbard T."/>
            <person name="Jackson M.J."/>
            <person name="Bentley D.R."/>
            <person name="Beck S."/>
            <person name="Rogers J."/>
            <person name="Dunham I."/>
        </authorList>
    </citation>
    <scope>NUCLEOTIDE SEQUENCE [LARGE SCALE GENOMIC DNA]</scope>
</reference>
<keyword id="KW-0040">ANK repeat</keyword>
<keyword id="KW-0175">Coiled coil</keyword>
<keyword id="KW-1185">Reference proteome</keyword>
<keyword id="KW-0677">Repeat</keyword>
<organism>
    <name type="scientific">Homo sapiens</name>
    <name type="common">Human</name>
    <dbReference type="NCBI Taxonomy" id="9606"/>
    <lineage>
        <taxon>Eukaryota</taxon>
        <taxon>Metazoa</taxon>
        <taxon>Chordata</taxon>
        <taxon>Craniata</taxon>
        <taxon>Vertebrata</taxon>
        <taxon>Euteleostomi</taxon>
        <taxon>Mammalia</taxon>
        <taxon>Eutheria</taxon>
        <taxon>Euarchontoglires</taxon>
        <taxon>Primates</taxon>
        <taxon>Haplorrhini</taxon>
        <taxon>Catarrhini</taxon>
        <taxon>Hominidae</taxon>
        <taxon>Homo</taxon>
    </lineage>
</organism>
<gene>
    <name evidence="4" type="primary">ANKRD20A2P</name>
    <name type="synonym">ANKRD20A2</name>
</gene>
<feature type="chain" id="PRO_0000240837" description="Putative ankyrin repeat domain-containing protein 20A2">
    <location>
        <begin position="1"/>
        <end position="823"/>
    </location>
</feature>
<feature type="repeat" description="ANK 1">
    <location>
        <begin position="66"/>
        <end position="95"/>
    </location>
</feature>
<feature type="repeat" description="ANK 2">
    <location>
        <begin position="99"/>
        <end position="128"/>
    </location>
</feature>
<feature type="repeat" description="ANK 3">
    <location>
        <begin position="132"/>
        <end position="161"/>
    </location>
</feature>
<feature type="repeat" description="ANK 4">
    <location>
        <begin position="165"/>
        <end position="194"/>
    </location>
</feature>
<feature type="repeat" description="ANK 5">
    <location>
        <begin position="198"/>
        <end position="227"/>
    </location>
</feature>
<feature type="region of interest" description="Disordered" evidence="2">
    <location>
        <begin position="301"/>
        <end position="343"/>
    </location>
</feature>
<feature type="region of interest" description="Disordered" evidence="2">
    <location>
        <begin position="355"/>
        <end position="402"/>
    </location>
</feature>
<feature type="coiled-coil region" evidence="1">
    <location>
        <begin position="431"/>
        <end position="480"/>
    </location>
</feature>
<feature type="coiled-coil region" evidence="1">
    <location>
        <begin position="565"/>
        <end position="724"/>
    </location>
</feature>
<feature type="coiled-coil region" evidence="1">
    <location>
        <begin position="776"/>
        <end position="805"/>
    </location>
</feature>
<feature type="compositionally biased region" description="Basic and acidic residues" evidence="2">
    <location>
        <begin position="372"/>
        <end position="384"/>
    </location>
</feature>
<dbReference type="EMBL" id="AL773545">
    <property type="status" value="NOT_ANNOTATED_CDS"/>
    <property type="molecule type" value="Genomic_DNA"/>
</dbReference>
<dbReference type="EMBL" id="BX664727">
    <property type="status" value="NOT_ANNOTATED_CDS"/>
    <property type="molecule type" value="Genomic_DNA"/>
</dbReference>
<dbReference type="RefSeq" id="NP_001012421.1">
    <property type="nucleotide sequence ID" value="NM_001012421.1"/>
</dbReference>
<dbReference type="SMR" id="Q5SQ80"/>
<dbReference type="BioGRID" id="137462">
    <property type="interactions" value="6"/>
</dbReference>
<dbReference type="FunCoup" id="Q5SQ80">
    <property type="interactions" value="2"/>
</dbReference>
<dbReference type="IntAct" id="Q5SQ80">
    <property type="interactions" value="7"/>
</dbReference>
<dbReference type="STRING" id="9606.ENSP00000366826"/>
<dbReference type="iPTMnet" id="Q5SQ80"/>
<dbReference type="PhosphoSitePlus" id="Q5SQ80"/>
<dbReference type="BioMuta" id="ANKRD20A2"/>
<dbReference type="DMDM" id="74743522"/>
<dbReference type="jPOST" id="Q5SQ80"/>
<dbReference type="MassIVE" id="Q5SQ80"/>
<dbReference type="PaxDb" id="9606-ENSP00000366826"/>
<dbReference type="PeptideAtlas" id="Q5SQ80"/>
<dbReference type="Antibodypedia" id="71388">
    <property type="antibodies" value="3 antibodies from 2 providers"/>
</dbReference>
<dbReference type="UCSC" id="uc004acd.4">
    <property type="organism name" value="human"/>
</dbReference>
<dbReference type="AGR" id="HGNC:31979"/>
<dbReference type="GeneCards" id="ANKRD20A2P"/>
<dbReference type="HGNC" id="HGNC:31979">
    <property type="gene designation" value="ANKRD20A2P"/>
</dbReference>
<dbReference type="neXtProt" id="NX_Q5SQ80"/>
<dbReference type="VEuPathDB" id="HostDB:ENSG00000183148"/>
<dbReference type="eggNOG" id="KOG0504">
    <property type="taxonomic scope" value="Eukaryota"/>
</dbReference>
<dbReference type="HOGENOM" id="CLU_001111_3_0_1"/>
<dbReference type="InParanoid" id="Q5SQ80"/>
<dbReference type="OMA" id="INVNMLY"/>
<dbReference type="OrthoDB" id="6577879at2759"/>
<dbReference type="PAN-GO" id="Q5SQ80">
    <property type="GO annotations" value="0 GO annotations based on evolutionary models"/>
</dbReference>
<dbReference type="PhylomeDB" id="Q5SQ80"/>
<dbReference type="TreeFam" id="TF333496"/>
<dbReference type="PathwayCommons" id="Q5SQ80"/>
<dbReference type="BioGRID-ORCS" id="441430">
    <property type="hits" value="358 hits in 595 CRISPR screens"/>
</dbReference>
<dbReference type="GenomeRNAi" id="441430"/>
<dbReference type="Pharos" id="Q5SQ80">
    <property type="development level" value="Tdark"/>
</dbReference>
<dbReference type="PRO" id="PR:Q5SQ80"/>
<dbReference type="Proteomes" id="UP000005640">
    <property type="component" value="Chromosome 9"/>
</dbReference>
<dbReference type="RNAct" id="Q5SQ80">
    <property type="molecule type" value="protein"/>
</dbReference>
<dbReference type="Bgee" id="ENSG00000183148">
    <property type="expression patterns" value="Expressed in male germ line stem cell (sensu Vertebrata) in testis and 102 other cell types or tissues"/>
</dbReference>
<dbReference type="ExpressionAtlas" id="Q5SQ80">
    <property type="expression patterns" value="baseline and differential"/>
</dbReference>
<dbReference type="FunFam" id="1.25.40.20:FF:000518">
    <property type="entry name" value="Ankyrin repeat domain-containing protein 20A1"/>
    <property type="match status" value="1"/>
</dbReference>
<dbReference type="FunFam" id="1.25.40.20:FF:000208">
    <property type="entry name" value="Ankyrin repeat domain-containing protein 26"/>
    <property type="match status" value="1"/>
</dbReference>
<dbReference type="Gene3D" id="1.25.40.20">
    <property type="entry name" value="Ankyrin repeat-containing domain"/>
    <property type="match status" value="2"/>
</dbReference>
<dbReference type="InterPro" id="IPR050657">
    <property type="entry name" value="Ankyrin_repeat_domain"/>
</dbReference>
<dbReference type="InterPro" id="IPR002110">
    <property type="entry name" value="Ankyrin_rpt"/>
</dbReference>
<dbReference type="InterPro" id="IPR036770">
    <property type="entry name" value="Ankyrin_rpt-contain_sf"/>
</dbReference>
<dbReference type="InterPro" id="IPR039497">
    <property type="entry name" value="CC144C-like_CC_dom"/>
</dbReference>
<dbReference type="PANTHER" id="PTHR24147">
    <property type="entry name" value="ANKYRIN REPEAT DOMAIN 36-RELATED"/>
    <property type="match status" value="1"/>
</dbReference>
<dbReference type="PANTHER" id="PTHR24147:SF1">
    <property type="entry name" value="ANKYRIN REPEAT DOMAIN-CONTAINING PROTEIN 20A1-RELATED"/>
    <property type="match status" value="1"/>
</dbReference>
<dbReference type="Pfam" id="PF00023">
    <property type="entry name" value="Ank"/>
    <property type="match status" value="3"/>
</dbReference>
<dbReference type="Pfam" id="PF12796">
    <property type="entry name" value="Ank_2"/>
    <property type="match status" value="1"/>
</dbReference>
<dbReference type="Pfam" id="PF14915">
    <property type="entry name" value="CCDC144C"/>
    <property type="match status" value="2"/>
</dbReference>
<dbReference type="PRINTS" id="PR01415">
    <property type="entry name" value="ANKYRIN"/>
</dbReference>
<dbReference type="SMART" id="SM00248">
    <property type="entry name" value="ANK"/>
    <property type="match status" value="6"/>
</dbReference>
<dbReference type="SUPFAM" id="SSF48403">
    <property type="entry name" value="Ankyrin repeat"/>
    <property type="match status" value="1"/>
</dbReference>
<dbReference type="PROSITE" id="PS50297">
    <property type="entry name" value="ANK_REP_REGION"/>
    <property type="match status" value="1"/>
</dbReference>
<dbReference type="PROSITE" id="PS50088">
    <property type="entry name" value="ANK_REPEAT"/>
    <property type="match status" value="4"/>
</dbReference>
<protein>
    <recommendedName>
        <fullName>Putative ankyrin repeat domain-containing protein 20A2</fullName>
    </recommendedName>
    <alternativeName>
        <fullName evidence="4">Ankyrin repeat domain-containing protein 20A2 pseudogene</fullName>
    </alternativeName>
</protein>